<evidence type="ECO:0000250" key="1"/>
<evidence type="ECO:0000250" key="2">
    <source>
        <dbReference type="UniProtKB" id="P54709"/>
    </source>
</evidence>
<evidence type="ECO:0000250" key="3">
    <source>
        <dbReference type="UniProtKB" id="Q63377"/>
    </source>
</evidence>
<evidence type="ECO:0000255" key="4"/>
<evidence type="ECO:0000269" key="5">
    <source>
    </source>
</evidence>
<evidence type="ECO:0000269" key="6">
    <source>
    </source>
</evidence>
<evidence type="ECO:0000305" key="7"/>
<dbReference type="EMBL" id="U59761">
    <property type="protein sequence ID" value="AAC00019.1"/>
    <property type="molecule type" value="mRNA"/>
</dbReference>
<dbReference type="CCDS" id="CCDS23414.1"/>
<dbReference type="RefSeq" id="NP_031528.1">
    <property type="nucleotide sequence ID" value="NM_007502.6"/>
</dbReference>
<dbReference type="SMR" id="P97370"/>
<dbReference type="BioGRID" id="198246">
    <property type="interactions" value="1"/>
</dbReference>
<dbReference type="FunCoup" id="P97370">
    <property type="interactions" value="1555"/>
</dbReference>
<dbReference type="IntAct" id="P97370">
    <property type="interactions" value="2"/>
</dbReference>
<dbReference type="STRING" id="10090.ENSMUSP00000034983"/>
<dbReference type="GlyConnect" id="2729">
    <property type="glycosylation" value="7 N-Linked glycans (2 sites)"/>
</dbReference>
<dbReference type="GlyCosmos" id="P97370">
    <property type="glycosylation" value="2 sites, 7 glycans"/>
</dbReference>
<dbReference type="GlyGen" id="P97370">
    <property type="glycosylation" value="3 sites, 9 N-linked glycans (2 sites), 1 O-linked glycan (1 site)"/>
</dbReference>
<dbReference type="iPTMnet" id="P97370"/>
<dbReference type="PhosphoSitePlus" id="P97370"/>
<dbReference type="SwissPalm" id="P97370"/>
<dbReference type="jPOST" id="P97370"/>
<dbReference type="PaxDb" id="10090-ENSMUSP00000034983"/>
<dbReference type="PeptideAtlas" id="P97370"/>
<dbReference type="ProteomicsDB" id="265121"/>
<dbReference type="Pumba" id="P97370"/>
<dbReference type="Antibodypedia" id="33485">
    <property type="antibodies" value="404 antibodies from 32 providers"/>
</dbReference>
<dbReference type="DNASU" id="11933"/>
<dbReference type="Ensembl" id="ENSMUST00000034983.7">
    <property type="protein sequence ID" value="ENSMUSP00000034983.6"/>
    <property type="gene ID" value="ENSMUSG00000032412.9"/>
</dbReference>
<dbReference type="GeneID" id="11933"/>
<dbReference type="KEGG" id="mmu:11933"/>
<dbReference type="UCSC" id="uc009rck.2">
    <property type="organism name" value="mouse"/>
</dbReference>
<dbReference type="AGR" id="MGI:107788"/>
<dbReference type="CTD" id="483"/>
<dbReference type="MGI" id="MGI:107788">
    <property type="gene designation" value="Atp1b3"/>
</dbReference>
<dbReference type="VEuPathDB" id="HostDB:ENSMUSG00000032412"/>
<dbReference type="eggNOG" id="KOG3927">
    <property type="taxonomic scope" value="Eukaryota"/>
</dbReference>
<dbReference type="GeneTree" id="ENSGT01030000234579"/>
<dbReference type="HOGENOM" id="CLU_057702_1_1_1"/>
<dbReference type="InParanoid" id="P97370"/>
<dbReference type="OMA" id="NRNSGEF"/>
<dbReference type="OrthoDB" id="5912413at2759"/>
<dbReference type="PhylomeDB" id="P97370"/>
<dbReference type="TreeFam" id="TF314618"/>
<dbReference type="Reactome" id="R-MMU-210991">
    <property type="pathway name" value="Basigin interactions"/>
</dbReference>
<dbReference type="Reactome" id="R-MMU-5578775">
    <property type="pathway name" value="Ion homeostasis"/>
</dbReference>
<dbReference type="Reactome" id="R-MMU-936837">
    <property type="pathway name" value="Ion transport by P-type ATPases"/>
</dbReference>
<dbReference type="BioGRID-ORCS" id="11933">
    <property type="hits" value="19 hits in 79 CRISPR screens"/>
</dbReference>
<dbReference type="ChiTaRS" id="Atp1b3">
    <property type="organism name" value="mouse"/>
</dbReference>
<dbReference type="PRO" id="PR:P97370"/>
<dbReference type="Proteomes" id="UP000000589">
    <property type="component" value="Chromosome 9"/>
</dbReference>
<dbReference type="RNAct" id="P97370">
    <property type="molecule type" value="protein"/>
</dbReference>
<dbReference type="Bgee" id="ENSMUSG00000032412">
    <property type="expression patterns" value="Expressed in sciatic nerve and 261 other cell types or tissues"/>
</dbReference>
<dbReference type="ExpressionAtlas" id="P97370">
    <property type="expression patterns" value="baseline and differential"/>
</dbReference>
<dbReference type="GO" id="GO:0016324">
    <property type="term" value="C:apical plasma membrane"/>
    <property type="evidence" value="ECO:0000250"/>
    <property type="project" value="UniProtKB"/>
</dbReference>
<dbReference type="GO" id="GO:0016323">
    <property type="term" value="C:basolateral plasma membrane"/>
    <property type="evidence" value="ECO:0000250"/>
    <property type="project" value="UniProtKB"/>
</dbReference>
<dbReference type="GO" id="GO:0005737">
    <property type="term" value="C:cytoplasm"/>
    <property type="evidence" value="ECO:0000314"/>
    <property type="project" value="MGI"/>
</dbReference>
<dbReference type="GO" id="GO:0042470">
    <property type="term" value="C:melanosome"/>
    <property type="evidence" value="ECO:0007669"/>
    <property type="project" value="UniProtKB-SubCell"/>
</dbReference>
<dbReference type="GO" id="GO:0005890">
    <property type="term" value="C:sodium:potassium-exchanging ATPase complex"/>
    <property type="evidence" value="ECO:0007669"/>
    <property type="project" value="Ensembl"/>
</dbReference>
<dbReference type="GO" id="GO:0036126">
    <property type="term" value="C:sperm flagellum"/>
    <property type="evidence" value="ECO:0007669"/>
    <property type="project" value="Ensembl"/>
</dbReference>
<dbReference type="GO" id="GO:0001671">
    <property type="term" value="F:ATPase activator activity"/>
    <property type="evidence" value="ECO:0007669"/>
    <property type="project" value="Ensembl"/>
</dbReference>
<dbReference type="GO" id="GO:0051117">
    <property type="term" value="F:ATPase binding"/>
    <property type="evidence" value="ECO:0007669"/>
    <property type="project" value="Ensembl"/>
</dbReference>
<dbReference type="GO" id="GO:0030674">
    <property type="term" value="F:protein-macromolecule adaptor activity"/>
    <property type="evidence" value="ECO:0007669"/>
    <property type="project" value="Ensembl"/>
</dbReference>
<dbReference type="GO" id="GO:0141109">
    <property type="term" value="F:transporter activator activity"/>
    <property type="evidence" value="ECO:0007669"/>
    <property type="project" value="Ensembl"/>
</dbReference>
<dbReference type="GO" id="GO:0030007">
    <property type="term" value="P:intracellular potassium ion homeostasis"/>
    <property type="evidence" value="ECO:0007669"/>
    <property type="project" value="Ensembl"/>
</dbReference>
<dbReference type="GO" id="GO:0006883">
    <property type="term" value="P:intracellular sodium ion homeostasis"/>
    <property type="evidence" value="ECO:0007669"/>
    <property type="project" value="Ensembl"/>
</dbReference>
<dbReference type="GO" id="GO:0086009">
    <property type="term" value="P:membrane repolarization"/>
    <property type="evidence" value="ECO:0007669"/>
    <property type="project" value="Ensembl"/>
</dbReference>
<dbReference type="GO" id="GO:1903288">
    <property type="term" value="P:positive regulation of potassium ion import across plasma membrane"/>
    <property type="evidence" value="ECO:0007669"/>
    <property type="project" value="Ensembl"/>
</dbReference>
<dbReference type="GO" id="GO:1903278">
    <property type="term" value="P:positive regulation of sodium ion export across plasma membrane"/>
    <property type="evidence" value="ECO:0007669"/>
    <property type="project" value="Ensembl"/>
</dbReference>
<dbReference type="GO" id="GO:1990573">
    <property type="term" value="P:potassium ion import across plasma membrane"/>
    <property type="evidence" value="ECO:0007669"/>
    <property type="project" value="Ensembl"/>
</dbReference>
<dbReference type="GO" id="GO:0072659">
    <property type="term" value="P:protein localization to plasma membrane"/>
    <property type="evidence" value="ECO:0007669"/>
    <property type="project" value="Ensembl"/>
</dbReference>
<dbReference type="GO" id="GO:0050821">
    <property type="term" value="P:protein stabilization"/>
    <property type="evidence" value="ECO:0007669"/>
    <property type="project" value="Ensembl"/>
</dbReference>
<dbReference type="GO" id="GO:0036376">
    <property type="term" value="P:sodium ion export across plasma membrane"/>
    <property type="evidence" value="ECO:0007669"/>
    <property type="project" value="Ensembl"/>
</dbReference>
<dbReference type="FunFam" id="2.60.40.1660:FF:000005">
    <property type="entry name" value="Sodium/potassium-transporting ATPase subunit beta"/>
    <property type="match status" value="1"/>
</dbReference>
<dbReference type="Gene3D" id="2.60.40.1660">
    <property type="entry name" value="Na, k-atpase alpha subunit"/>
    <property type="match status" value="1"/>
</dbReference>
<dbReference type="InterPro" id="IPR000402">
    <property type="entry name" value="Na/K_ATPase_sub_beta"/>
</dbReference>
<dbReference type="InterPro" id="IPR038702">
    <property type="entry name" value="Na/K_ATPase_sub_beta_sf"/>
</dbReference>
<dbReference type="NCBIfam" id="TIGR01107">
    <property type="entry name" value="Na_K_ATPase_bet"/>
    <property type="match status" value="1"/>
</dbReference>
<dbReference type="PANTHER" id="PTHR11523">
    <property type="entry name" value="SODIUM/POTASSIUM-DEPENDENT ATPASE BETA SUBUNIT"/>
    <property type="match status" value="1"/>
</dbReference>
<dbReference type="PANTHER" id="PTHR11523:SF47">
    <property type="entry name" value="SODIUM_POTASSIUM-TRANSPORTING ATPASE SUBUNIT BETA-3"/>
    <property type="match status" value="1"/>
</dbReference>
<dbReference type="Pfam" id="PF00287">
    <property type="entry name" value="Na_K-ATPase"/>
    <property type="match status" value="1"/>
</dbReference>
<dbReference type="PROSITE" id="PS00390">
    <property type="entry name" value="ATPASE_NA_K_BETA_1"/>
    <property type="match status" value="1"/>
</dbReference>
<organism>
    <name type="scientific">Mus musculus</name>
    <name type="common">Mouse</name>
    <dbReference type="NCBI Taxonomy" id="10090"/>
    <lineage>
        <taxon>Eukaryota</taxon>
        <taxon>Metazoa</taxon>
        <taxon>Chordata</taxon>
        <taxon>Craniata</taxon>
        <taxon>Vertebrata</taxon>
        <taxon>Euteleostomi</taxon>
        <taxon>Mammalia</taxon>
        <taxon>Eutheria</taxon>
        <taxon>Euarchontoglires</taxon>
        <taxon>Glires</taxon>
        <taxon>Rodentia</taxon>
        <taxon>Myomorpha</taxon>
        <taxon>Muroidea</taxon>
        <taxon>Muridae</taxon>
        <taxon>Murinae</taxon>
        <taxon>Mus</taxon>
        <taxon>Mus</taxon>
    </lineage>
</organism>
<proteinExistence type="evidence at protein level"/>
<sequence length="278" mass="31776">MTKTEKKSFHQSLAEWKLFIYNPSSGEFLGRTSKSWGLILLFYLVFYGFLAALFTFTMWAMLQTLNDEVPKYRDQIPSPGLMVFPKPQTALEYTFSMSEPQTYKKLVEDLESFLKPYSVEEQKNLTSCPDGAPFIQHGPDYRACQFPVSLLEECSGVTDANFGYSKGQPCILVKMNRIIDLIPDGYPQISCLPKEENATIATYPEFGVLDLKYFPYYGKKRHVGYRQPLVAVQVKFDSGLNKKEVTVECHIAGTRNLKNKNERDKFLGRVSFKVTARA</sequence>
<name>AT1B3_MOUSE</name>
<keyword id="KW-1003">Cell membrane</keyword>
<keyword id="KW-0903">Direct protein sequencing</keyword>
<keyword id="KW-1015">Disulfide bond</keyword>
<keyword id="KW-0325">Glycoprotein</keyword>
<keyword id="KW-0406">Ion transport</keyword>
<keyword id="KW-0472">Membrane</keyword>
<keyword id="KW-0630">Potassium</keyword>
<keyword id="KW-0633">Potassium transport</keyword>
<keyword id="KW-1185">Reference proteome</keyword>
<keyword id="KW-0735">Signal-anchor</keyword>
<keyword id="KW-0915">Sodium</keyword>
<keyword id="KW-0739">Sodium transport</keyword>
<keyword id="KW-0740">Sodium/potassium transport</keyword>
<keyword id="KW-0812">Transmembrane</keyword>
<keyword id="KW-1133">Transmembrane helix</keyword>
<keyword id="KW-0813">Transport</keyword>
<reference key="1">
    <citation type="journal article" date="1997" name="Biochim. Biophys. Acta">
        <title>Novel beta 3 isoform of the Na,K-ATPase beta subunit from mouse retina.</title>
        <authorList>
            <person name="Besirli C.G."/>
            <person name="Gong T.-W.L."/>
            <person name="Lomax M.I."/>
        </authorList>
    </citation>
    <scope>NUCLEOTIDE SEQUENCE [MRNA]</scope>
    <source>
        <strain>BALB/cJ</strain>
        <tissue>Retina</tissue>
    </source>
</reference>
<reference key="2">
    <citation type="submission" date="2007-04" db="UniProtKB">
        <authorList>
            <person name="Lubec G."/>
            <person name="Kang S.U."/>
        </authorList>
    </citation>
    <scope>PROTEIN SEQUENCE OF 18-31</scope>
    <scope>IDENTIFICATION BY MASS SPECTROMETRY</scope>
    <source>
        <strain>C57BL/6J</strain>
        <tissue>Brain</tissue>
    </source>
</reference>
<reference key="3">
    <citation type="journal article" date="2009" name="Mol. Cell. Proteomics">
        <title>The mouse C2C12 myoblast cell surface N-linked glycoproteome: identification, glycosite occupancy, and membrane orientation.</title>
        <authorList>
            <person name="Gundry R.L."/>
            <person name="Raginski K."/>
            <person name="Tarasova Y."/>
            <person name="Tchernyshyov I."/>
            <person name="Bausch-Fluck D."/>
            <person name="Elliott S.T."/>
            <person name="Boheler K.R."/>
            <person name="Van Eyk J.E."/>
            <person name="Wollscheid B."/>
        </authorList>
    </citation>
    <scope>GLYCOSYLATION [LARGE SCALE ANALYSIS] AT ASN-197</scope>
    <source>
        <tissue>Myoblast</tissue>
    </source>
</reference>
<reference key="4">
    <citation type="journal article" date="2009" name="Nat. Biotechnol.">
        <title>Mass-spectrometric identification and relative quantification of N-linked cell surface glycoproteins.</title>
        <authorList>
            <person name="Wollscheid B."/>
            <person name="Bausch-Fluck D."/>
            <person name="Henderson C."/>
            <person name="O'Brien R."/>
            <person name="Bibel M."/>
            <person name="Schiess R."/>
            <person name="Aebersold R."/>
            <person name="Watts J.D."/>
        </authorList>
    </citation>
    <scope>GLYCOSYLATION [LARGE SCALE ANALYSIS] AT ASN-124 AND ASN-197</scope>
</reference>
<reference key="5">
    <citation type="journal article" date="2010" name="Cell">
        <title>A tissue-specific atlas of mouse protein phosphorylation and expression.</title>
        <authorList>
            <person name="Huttlin E.L."/>
            <person name="Jedrychowski M.P."/>
            <person name="Elias J.E."/>
            <person name="Goswami T."/>
            <person name="Rad R."/>
            <person name="Beausoleil S.A."/>
            <person name="Villen J."/>
            <person name="Haas W."/>
            <person name="Sowa M.E."/>
            <person name="Gygi S.P."/>
        </authorList>
    </citation>
    <scope>IDENTIFICATION BY MASS SPECTROMETRY [LARGE SCALE ANALYSIS]</scope>
    <source>
        <tissue>Brain</tissue>
        <tissue>Brown adipose tissue</tissue>
        <tissue>Heart</tissue>
        <tissue>Kidney</tissue>
        <tissue>Liver</tissue>
        <tissue>Lung</tissue>
        <tissue>Pancreas</tissue>
        <tissue>Spleen</tissue>
        <tissue>Testis</tissue>
    </source>
</reference>
<comment type="function">
    <text>This is the non-catalytic component of the active enzyme, which catalyzes the hydrolysis of ATP coupled with the exchange of Na(+) and K(+) ions across the plasma membrane. The exact function of the beta-3 subunit is not known.</text>
</comment>
<comment type="subunit">
    <text evidence="3">The sodium/potassium-transporting ATPase is composed of a catalytic alpha subunit, an auxiliary non-catalytic beta subunit and an additional regulatory subunit. Interacts with catalytic alpha subunit ATP12A.</text>
</comment>
<comment type="subcellular location">
    <subcellularLocation>
        <location evidence="3">Apical cell membrane</location>
        <topology evidence="4">Single-pass type II membrane protein</topology>
    </subcellularLocation>
    <subcellularLocation>
        <location evidence="3">Basolateral cell membrane</location>
        <topology evidence="4">Single-pass type II membrane protein</topology>
    </subcellularLocation>
    <subcellularLocation>
        <location evidence="2">Melanosome</location>
    </subcellularLocation>
    <text evidence="2">Identified by mass spectrometry in melanosome fractions from stage I to stage IV.</text>
</comment>
<comment type="tissue specificity">
    <text>Widely expressed.</text>
</comment>
<comment type="domain">
    <text evidence="1">The C-terminal lobe folds into an immunoglobulin-like domain and may mediate cell adhesion properties.</text>
</comment>
<comment type="similarity">
    <text evidence="7">Belongs to the X(+)/potassium ATPases subunit beta family.</text>
</comment>
<feature type="chain" id="PRO_0000219109" description="Sodium/potassium-transporting ATPase subunit beta-3">
    <location>
        <begin position="1"/>
        <end position="278"/>
    </location>
</feature>
<feature type="topological domain" description="Cytoplasmic" evidence="4">
    <location>
        <begin position="1"/>
        <end position="35"/>
    </location>
</feature>
<feature type="transmembrane region" description="Helical; Signal-anchor for type II membrane protein" evidence="4">
    <location>
        <begin position="36"/>
        <end position="56"/>
    </location>
</feature>
<feature type="topological domain" description="Extracellular" evidence="4">
    <location>
        <begin position="57"/>
        <end position="278"/>
    </location>
</feature>
<feature type="region of interest" description="immunoglobulin-like" evidence="1">
    <location>
        <begin position="186"/>
        <end position="278"/>
    </location>
</feature>
<feature type="glycosylation site" description="N-linked (GlcNAc...) asparagine" evidence="5">
    <location>
        <position position="124"/>
    </location>
</feature>
<feature type="glycosylation site" description="N-linked (GlcNAc...) asparagine" evidence="5 6">
    <location>
        <position position="197"/>
    </location>
</feature>
<feature type="disulfide bond" evidence="1">
    <location>
        <begin position="128"/>
        <end position="144"/>
    </location>
</feature>
<feature type="disulfide bond" evidence="1">
    <location>
        <begin position="154"/>
        <end position="170"/>
    </location>
</feature>
<feature type="disulfide bond" evidence="1">
    <location>
        <begin position="191"/>
        <end position="249"/>
    </location>
</feature>
<accession>P97370</accession>
<protein>
    <recommendedName>
        <fullName>Sodium/potassium-transporting ATPase subunit beta-3</fullName>
    </recommendedName>
    <alternativeName>
        <fullName>Sodium/potassium-dependent ATPase subunit beta-3</fullName>
        <shortName>ATPB-3</shortName>
    </alternativeName>
    <cdAntigenName>CD298</cdAntigenName>
</protein>
<gene>
    <name type="primary">Atp1b3</name>
</gene>